<evidence type="ECO:0000255" key="1">
    <source>
        <dbReference type="HAMAP-Rule" id="MF_01838"/>
    </source>
</evidence>
<protein>
    <recommendedName>
        <fullName evidence="1">Enoyl-[acyl-carrier-protein] reductase [NADH]</fullName>
        <shortName evidence="1">ENR</shortName>
        <ecNumber evidence="1">1.3.1.9</ecNumber>
    </recommendedName>
</protein>
<keyword id="KW-0275">Fatty acid biosynthesis</keyword>
<keyword id="KW-0276">Fatty acid metabolism</keyword>
<keyword id="KW-0444">Lipid biosynthesis</keyword>
<keyword id="KW-0443">Lipid metabolism</keyword>
<keyword id="KW-0520">NAD</keyword>
<keyword id="KW-0560">Oxidoreductase</keyword>
<dbReference type="EC" id="1.3.1.9" evidence="1"/>
<dbReference type="EMBL" id="FM178379">
    <property type="protein sequence ID" value="CAQ79713.1"/>
    <property type="molecule type" value="Genomic_DNA"/>
</dbReference>
<dbReference type="RefSeq" id="WP_012550574.1">
    <property type="nucleotide sequence ID" value="NC_011312.1"/>
</dbReference>
<dbReference type="SMR" id="B6EHQ2"/>
<dbReference type="KEGG" id="vsa:VSAL_I2028"/>
<dbReference type="eggNOG" id="COG3007">
    <property type="taxonomic scope" value="Bacteria"/>
</dbReference>
<dbReference type="HOGENOM" id="CLU_057698_1_0_6"/>
<dbReference type="UniPathway" id="UPA00094"/>
<dbReference type="Proteomes" id="UP000001730">
    <property type="component" value="Chromosome 1"/>
</dbReference>
<dbReference type="GO" id="GO:0004318">
    <property type="term" value="F:enoyl-[acyl-carrier-protein] reductase (NADH) activity"/>
    <property type="evidence" value="ECO:0007669"/>
    <property type="project" value="UniProtKB-UniRule"/>
</dbReference>
<dbReference type="GO" id="GO:0051287">
    <property type="term" value="F:NAD binding"/>
    <property type="evidence" value="ECO:0007669"/>
    <property type="project" value="UniProtKB-UniRule"/>
</dbReference>
<dbReference type="GO" id="GO:0050343">
    <property type="term" value="F:trans-2-enoyl-CoA reductase (NADH) activity"/>
    <property type="evidence" value="ECO:0007669"/>
    <property type="project" value="TreeGrafter"/>
</dbReference>
<dbReference type="GO" id="GO:0006633">
    <property type="term" value="P:fatty acid biosynthetic process"/>
    <property type="evidence" value="ECO:0007669"/>
    <property type="project" value="UniProtKB-UniRule"/>
</dbReference>
<dbReference type="FunFam" id="3.40.50.720:FF:000221">
    <property type="entry name" value="Enoyl-[acyl-carrier-protein] reductase [NADH]"/>
    <property type="match status" value="1"/>
</dbReference>
<dbReference type="Gene3D" id="3.40.50.720">
    <property type="entry name" value="NAD(P)-binding Rossmann-like Domain"/>
    <property type="match status" value="1"/>
</dbReference>
<dbReference type="HAMAP" id="MF_01838">
    <property type="entry name" value="FabV_reductase"/>
    <property type="match status" value="1"/>
</dbReference>
<dbReference type="InterPro" id="IPR024906">
    <property type="entry name" value="Eno_Rdtase_FAD-bd_dom"/>
</dbReference>
<dbReference type="InterPro" id="IPR024910">
    <property type="entry name" value="Enoyl-CoA_Rdtase_cat_dom"/>
</dbReference>
<dbReference type="InterPro" id="IPR050048">
    <property type="entry name" value="FabV-like_NADH_b"/>
</dbReference>
<dbReference type="InterPro" id="IPR010758">
    <property type="entry name" value="Trans-2-enoyl-CoA_reductase"/>
</dbReference>
<dbReference type="NCBIfam" id="NF043048">
    <property type="entry name" value="EnoyACPredFabV"/>
    <property type="match status" value="1"/>
</dbReference>
<dbReference type="NCBIfam" id="NF010177">
    <property type="entry name" value="PRK13656.1"/>
    <property type="match status" value="1"/>
</dbReference>
<dbReference type="PANTHER" id="PTHR37480">
    <property type="entry name" value="ENOYL-[ACYL-CARRIER-PROTEIN] REDUCTASE [NADH]"/>
    <property type="match status" value="1"/>
</dbReference>
<dbReference type="PANTHER" id="PTHR37480:SF1">
    <property type="entry name" value="ENOYL-[ACYL-CARRIER-PROTEIN] REDUCTASE [NADH]"/>
    <property type="match status" value="1"/>
</dbReference>
<dbReference type="Pfam" id="PF07055">
    <property type="entry name" value="Eno-Rase_FAD_bd"/>
    <property type="match status" value="1"/>
</dbReference>
<dbReference type="Pfam" id="PF12242">
    <property type="entry name" value="Eno-Rase_NADH_b"/>
    <property type="match status" value="1"/>
</dbReference>
<dbReference type="Pfam" id="PF12241">
    <property type="entry name" value="Enoyl_reductase"/>
    <property type="match status" value="1"/>
</dbReference>
<proteinExistence type="inferred from homology"/>
<comment type="function">
    <text evidence="1">Involved in the final reduction of the elongation cycle of fatty acid synthesis (FAS II). Catalyzes the reduction of a carbon-carbon double bond in an enoyl moiety that is covalently linked to an acyl carrier protein (ACP).</text>
</comment>
<comment type="catalytic activity">
    <reaction evidence="1">
        <text>a 2,3-saturated acyl-[ACP] + NAD(+) = a (2E)-enoyl-[ACP] + NADH + H(+)</text>
        <dbReference type="Rhea" id="RHEA:10240"/>
        <dbReference type="Rhea" id="RHEA-COMP:9925"/>
        <dbReference type="Rhea" id="RHEA-COMP:9926"/>
        <dbReference type="ChEBI" id="CHEBI:15378"/>
        <dbReference type="ChEBI" id="CHEBI:57540"/>
        <dbReference type="ChEBI" id="CHEBI:57945"/>
        <dbReference type="ChEBI" id="CHEBI:78784"/>
        <dbReference type="ChEBI" id="CHEBI:78785"/>
        <dbReference type="EC" id="1.3.1.9"/>
    </reaction>
</comment>
<comment type="pathway">
    <text evidence="1">Lipid metabolism; fatty acid biosynthesis.</text>
</comment>
<comment type="subunit">
    <text evidence="1">Monomer.</text>
</comment>
<comment type="similarity">
    <text evidence="1">Belongs to the TER reductase family.</text>
</comment>
<accession>B6EHQ2</accession>
<feature type="chain" id="PRO_1000188353" description="Enoyl-[acyl-carrier-protein] reductase [NADH]">
    <location>
        <begin position="1"/>
        <end position="400"/>
    </location>
</feature>
<feature type="active site" description="Proton donor" evidence="1">
    <location>
        <position position="235"/>
    </location>
</feature>
<feature type="binding site" evidence="1">
    <location>
        <begin position="48"/>
        <end position="53"/>
    </location>
    <ligand>
        <name>NAD(+)</name>
        <dbReference type="ChEBI" id="CHEBI:57540"/>
    </ligand>
</feature>
<feature type="binding site" evidence="1">
    <location>
        <begin position="74"/>
        <end position="75"/>
    </location>
    <ligand>
        <name>NAD(+)</name>
        <dbReference type="ChEBI" id="CHEBI:57540"/>
    </ligand>
</feature>
<feature type="binding site" evidence="1">
    <location>
        <begin position="111"/>
        <end position="112"/>
    </location>
    <ligand>
        <name>NAD(+)</name>
        <dbReference type="ChEBI" id="CHEBI:57540"/>
    </ligand>
</feature>
<feature type="binding site" evidence="1">
    <location>
        <begin position="139"/>
        <end position="140"/>
    </location>
    <ligand>
        <name>NAD(+)</name>
        <dbReference type="ChEBI" id="CHEBI:57540"/>
    </ligand>
</feature>
<feature type="binding site" evidence="1">
    <location>
        <position position="225"/>
    </location>
    <ligand>
        <name>substrate</name>
    </ligand>
</feature>
<feature type="binding site" evidence="1">
    <location>
        <position position="244"/>
    </location>
    <ligand>
        <name>NAD(+)</name>
        <dbReference type="ChEBI" id="CHEBI:57540"/>
    </ligand>
</feature>
<feature type="binding site" evidence="1">
    <location>
        <begin position="273"/>
        <end position="275"/>
    </location>
    <ligand>
        <name>NAD(+)</name>
        <dbReference type="ChEBI" id="CHEBI:57540"/>
    </ligand>
</feature>
<feature type="site" description="Plays an important role in discriminating NADH against NADPH" evidence="1">
    <location>
        <position position="75"/>
    </location>
</feature>
<reference key="1">
    <citation type="journal article" date="2008" name="BMC Genomics">
        <title>The genome sequence of the fish pathogen Aliivibrio salmonicida strain LFI1238 shows extensive evidence of gene decay.</title>
        <authorList>
            <person name="Hjerde E."/>
            <person name="Lorentzen M.S."/>
            <person name="Holden M.T."/>
            <person name="Seeger K."/>
            <person name="Paulsen S."/>
            <person name="Bason N."/>
            <person name="Churcher C."/>
            <person name="Harris D."/>
            <person name="Norbertczak H."/>
            <person name="Quail M.A."/>
            <person name="Sanders S."/>
            <person name="Thurston S."/>
            <person name="Parkhill J."/>
            <person name="Willassen N.P."/>
            <person name="Thomson N.R."/>
        </authorList>
    </citation>
    <scope>NUCLEOTIDE SEQUENCE [LARGE SCALE GENOMIC DNA]</scope>
    <source>
        <strain>LFI1238</strain>
    </source>
</reference>
<name>FABV_ALISL</name>
<sequence>MIIKPRIRGFICTTTHPVGCEHNVKEQIALTKAQGPIANAPKRVLVVGSSSGYGLSSRITAAFGGGASTIGVFFEKAATEKKTGTAGWYNSAAFDKFAKEEGLYSKSLNGDAFSDEAKQKTIDLIKEDLGQIDMVVYSLASPVRKMPETGEVIRSSLKPIGNTYTATAVDTNKDAIIEASVEPATEQEIQDTITVMGGEDWELWMSALSDAGVLADGCKTVAYSYIGTELTWPIYWDGALGKAKMDLDRAATTLNEKLSATGGTANVAVLKSVVTQASSAIPVMPLYIAMVFKKMREEGVHEGCQEQILRMFSQRLYREDGSAPEVDDQNRLRLDDWELREDIQKHCRELWPQVTTENLKDLTDYVEYKEEFLKLFGFGVDGVDYDVDVNPLVEFDVADI</sequence>
<organism>
    <name type="scientific">Aliivibrio salmonicida (strain LFI1238)</name>
    <name type="common">Vibrio salmonicida (strain LFI1238)</name>
    <dbReference type="NCBI Taxonomy" id="316275"/>
    <lineage>
        <taxon>Bacteria</taxon>
        <taxon>Pseudomonadati</taxon>
        <taxon>Pseudomonadota</taxon>
        <taxon>Gammaproteobacteria</taxon>
        <taxon>Vibrionales</taxon>
        <taxon>Vibrionaceae</taxon>
        <taxon>Aliivibrio</taxon>
    </lineage>
</organism>
<gene>
    <name evidence="1" type="primary">fabV</name>
    <name type="ordered locus">VSAL_I2028</name>
</gene>